<protein>
    <recommendedName>
        <fullName evidence="1">Threonine--tRNA ligase</fullName>
        <ecNumber evidence="1">6.1.1.3</ecNumber>
    </recommendedName>
    <alternativeName>
        <fullName evidence="1">Threonyl-tRNA synthetase</fullName>
        <shortName evidence="1">ThrRS</shortName>
    </alternativeName>
</protein>
<dbReference type="EC" id="6.1.1.3" evidence="1"/>
<dbReference type="EMBL" id="CP000504">
    <property type="protein sequence ID" value="ABL88864.1"/>
    <property type="molecule type" value="Genomic_DNA"/>
</dbReference>
<dbReference type="RefSeq" id="WP_011763439.1">
    <property type="nucleotide sequence ID" value="NC_008701.1"/>
</dbReference>
<dbReference type="SMR" id="A1RV82"/>
<dbReference type="STRING" id="384616.Pisl_1713"/>
<dbReference type="GeneID" id="4616964"/>
<dbReference type="KEGG" id="pis:Pisl_1713"/>
<dbReference type="eggNOG" id="arCOG00401">
    <property type="taxonomic scope" value="Archaea"/>
</dbReference>
<dbReference type="HOGENOM" id="CLU_029833_0_0_2"/>
<dbReference type="OrthoDB" id="372136at2157"/>
<dbReference type="Proteomes" id="UP000002595">
    <property type="component" value="Chromosome"/>
</dbReference>
<dbReference type="GO" id="GO:0005737">
    <property type="term" value="C:cytoplasm"/>
    <property type="evidence" value="ECO:0007669"/>
    <property type="project" value="UniProtKB-SubCell"/>
</dbReference>
<dbReference type="GO" id="GO:0005524">
    <property type="term" value="F:ATP binding"/>
    <property type="evidence" value="ECO:0007669"/>
    <property type="project" value="UniProtKB-UniRule"/>
</dbReference>
<dbReference type="GO" id="GO:0004829">
    <property type="term" value="F:threonine-tRNA ligase activity"/>
    <property type="evidence" value="ECO:0007669"/>
    <property type="project" value="UniProtKB-UniRule"/>
</dbReference>
<dbReference type="GO" id="GO:0000049">
    <property type="term" value="F:tRNA binding"/>
    <property type="evidence" value="ECO:0007669"/>
    <property type="project" value="UniProtKB-KW"/>
</dbReference>
<dbReference type="GO" id="GO:0008270">
    <property type="term" value="F:zinc ion binding"/>
    <property type="evidence" value="ECO:0007669"/>
    <property type="project" value="InterPro"/>
</dbReference>
<dbReference type="GO" id="GO:0006435">
    <property type="term" value="P:threonyl-tRNA aminoacylation"/>
    <property type="evidence" value="ECO:0007669"/>
    <property type="project" value="UniProtKB-UniRule"/>
</dbReference>
<dbReference type="CDD" id="cd00860">
    <property type="entry name" value="ThrRS_anticodon"/>
    <property type="match status" value="1"/>
</dbReference>
<dbReference type="FunFam" id="3.40.50.800:FF:000001">
    <property type="entry name" value="Threonine--tRNA ligase"/>
    <property type="match status" value="1"/>
</dbReference>
<dbReference type="Gene3D" id="3.40.50.800">
    <property type="entry name" value="Anticodon-binding domain"/>
    <property type="match status" value="1"/>
</dbReference>
<dbReference type="Gene3D" id="3.30.930.10">
    <property type="entry name" value="Bira Bifunctional Protein, Domain 2"/>
    <property type="match status" value="1"/>
</dbReference>
<dbReference type="Gene3D" id="3.50.80.10">
    <property type="entry name" value="D-tyrosyl-tRNA(Tyr) deacylase"/>
    <property type="match status" value="1"/>
</dbReference>
<dbReference type="HAMAP" id="MF_00184">
    <property type="entry name" value="Thr_tRNA_synth"/>
    <property type="match status" value="1"/>
</dbReference>
<dbReference type="InterPro" id="IPR002314">
    <property type="entry name" value="aa-tRNA-synt_IIb"/>
</dbReference>
<dbReference type="InterPro" id="IPR006195">
    <property type="entry name" value="aa-tRNA-synth_II"/>
</dbReference>
<dbReference type="InterPro" id="IPR045864">
    <property type="entry name" value="aa-tRNA-synth_II/BPL/LPL"/>
</dbReference>
<dbReference type="InterPro" id="IPR004154">
    <property type="entry name" value="Anticodon-bd"/>
</dbReference>
<dbReference type="InterPro" id="IPR036621">
    <property type="entry name" value="Anticodon-bd_dom_sf"/>
</dbReference>
<dbReference type="InterPro" id="IPR023509">
    <property type="entry name" value="DTD-like_sf"/>
</dbReference>
<dbReference type="InterPro" id="IPR002320">
    <property type="entry name" value="Thr-tRNA-ligase_IIa"/>
</dbReference>
<dbReference type="InterPro" id="IPR015011">
    <property type="entry name" value="Threonyl-tRNA_syn_edit_dom_arc"/>
</dbReference>
<dbReference type="InterPro" id="IPR047246">
    <property type="entry name" value="ThrRS_anticodon"/>
</dbReference>
<dbReference type="NCBIfam" id="NF003068">
    <property type="entry name" value="PRK03991.1"/>
    <property type="match status" value="1"/>
</dbReference>
<dbReference type="PANTHER" id="PTHR11451:SF44">
    <property type="entry name" value="THREONINE--TRNA LIGASE, CHLOROPLASTIC_MITOCHONDRIAL 2"/>
    <property type="match status" value="1"/>
</dbReference>
<dbReference type="PANTHER" id="PTHR11451">
    <property type="entry name" value="THREONINE-TRNA LIGASE"/>
    <property type="match status" value="1"/>
</dbReference>
<dbReference type="Pfam" id="PF03129">
    <property type="entry name" value="HGTP_anticodon"/>
    <property type="match status" value="1"/>
</dbReference>
<dbReference type="Pfam" id="PF00587">
    <property type="entry name" value="tRNA-synt_2b"/>
    <property type="match status" value="1"/>
</dbReference>
<dbReference type="Pfam" id="PF08915">
    <property type="entry name" value="tRNA-Thr_ED"/>
    <property type="match status" value="1"/>
</dbReference>
<dbReference type="PRINTS" id="PR01047">
    <property type="entry name" value="TRNASYNTHTHR"/>
</dbReference>
<dbReference type="SUPFAM" id="SSF52954">
    <property type="entry name" value="Class II aaRS ABD-related"/>
    <property type="match status" value="1"/>
</dbReference>
<dbReference type="SUPFAM" id="SSF55681">
    <property type="entry name" value="Class II aaRS and biotin synthetases"/>
    <property type="match status" value="1"/>
</dbReference>
<dbReference type="PROSITE" id="PS50862">
    <property type="entry name" value="AA_TRNA_LIGASE_II"/>
    <property type="match status" value="1"/>
</dbReference>
<organism>
    <name type="scientific">Pyrobaculum islandicum (strain DSM 4184 / JCM 9189 / GEO3)</name>
    <dbReference type="NCBI Taxonomy" id="384616"/>
    <lineage>
        <taxon>Archaea</taxon>
        <taxon>Thermoproteota</taxon>
        <taxon>Thermoprotei</taxon>
        <taxon>Thermoproteales</taxon>
        <taxon>Thermoproteaceae</taxon>
        <taxon>Pyrobaculum</taxon>
    </lineage>
</organism>
<evidence type="ECO:0000255" key="1">
    <source>
        <dbReference type="HAMAP-Rule" id="MF_00184"/>
    </source>
</evidence>
<name>SYT_PYRIL</name>
<gene>
    <name evidence="1" type="primary">thrS</name>
    <name type="ordered locus">Pisl_1713</name>
</gene>
<accession>A1RV82</accession>
<sequence>MRVLYIHAERFTWDVKDPASDIRDEPISGKANNALVIFATVERGDIPDEGFLRQIARDIIDVANKVKASSIVIYPYAHLSSELARPYVAREVLNKLYEVVKSEFHGEVYKAPFGYYKAFEIKCFGHPLSELSRSFKPEGAKVEKKVEERRDVYIVLTPSGEEYNPADFNYDKFEDLKALVDKEVFKKELSGGSEPRYLDYLRKFGFEWESMSDVGHMRYAPEATIMIELVEDYAYMVAKSLGIPVFKIRGTNMFKLSETAIESHARLFGERLYVVESDTDLILRYAACFQQFAMVKDWVISYKHLPFGVIEIADSYRHEQPGETVLLFRLRRFFMPDLHIFTRDMAEAIDISFKLHEVIFREIEKLGRTYVSLYNVTEEFYKEYKNYLIELAKREGKPILVRILPGQKYYWVLNVEFHIIDELGRPREIATFQIDIGNAKRFGIKYVDENNQVRYPVIIHTAILGSVERYLYVVFDTMAKAEKAGKIPRLPTWLSPVQVRIIPITRDNLKYAVEIADKLETEGIRVDIDDRDETLSKKIRDAEVSWIPYICVVGSKEETEGVLSVRERGGGQYKTTPEELIKKIKEETRGYPNRPLYMPRFLSQRPSRG</sequence>
<keyword id="KW-0030">Aminoacyl-tRNA synthetase</keyword>
<keyword id="KW-0067">ATP-binding</keyword>
<keyword id="KW-0963">Cytoplasm</keyword>
<keyword id="KW-0436">Ligase</keyword>
<keyword id="KW-0479">Metal-binding</keyword>
<keyword id="KW-0547">Nucleotide-binding</keyword>
<keyword id="KW-0648">Protein biosynthesis</keyword>
<keyword id="KW-0694">RNA-binding</keyword>
<keyword id="KW-0820">tRNA-binding</keyword>
<keyword id="KW-0862">Zinc</keyword>
<reference key="1">
    <citation type="submission" date="2006-12" db="EMBL/GenBank/DDBJ databases">
        <title>Complete sequence of Pyrobaculum islandicum DSM 4184.</title>
        <authorList>
            <person name="Copeland A."/>
            <person name="Lucas S."/>
            <person name="Lapidus A."/>
            <person name="Barry K."/>
            <person name="Detter J.C."/>
            <person name="Glavina del Rio T."/>
            <person name="Dalin E."/>
            <person name="Tice H."/>
            <person name="Pitluck S."/>
            <person name="Meincke L."/>
            <person name="Brettin T."/>
            <person name="Bruce D."/>
            <person name="Han C."/>
            <person name="Tapia R."/>
            <person name="Gilna P."/>
            <person name="Schmutz J."/>
            <person name="Larimer F."/>
            <person name="Land M."/>
            <person name="Hauser L."/>
            <person name="Kyrpides N."/>
            <person name="Mikhailova N."/>
            <person name="Cozen A.E."/>
            <person name="Fitz-Gibbon S.T."/>
            <person name="House C.H."/>
            <person name="Saltikov C."/>
            <person name="Lowe T."/>
            <person name="Richardson P."/>
        </authorList>
    </citation>
    <scope>NUCLEOTIDE SEQUENCE [LARGE SCALE GENOMIC DNA]</scope>
    <source>
        <strain>DSM 4184 / JCM 9189 / GEO3</strain>
    </source>
</reference>
<feature type="chain" id="PRO_1000020483" description="Threonine--tRNA ligase">
    <location>
        <begin position="1"/>
        <end position="609"/>
    </location>
</feature>
<feature type="region of interest" description="Editing domain" evidence="1">
    <location>
        <begin position="1"/>
        <end position="143"/>
    </location>
</feature>
<feature type="region of interest" description="Catalytic" evidence="1">
    <location>
        <begin position="195"/>
        <end position="491"/>
    </location>
</feature>
<feature type="region of interest" description="Catalytic">
    <location>
        <begin position="196"/>
        <end position="491"/>
    </location>
</feature>
<feature type="binding site" evidence="1">
    <location>
        <position position="288"/>
    </location>
    <ligand>
        <name>Zn(2+)</name>
        <dbReference type="ChEBI" id="CHEBI:29105"/>
    </ligand>
</feature>
<feature type="binding site" evidence="1">
    <location>
        <position position="339"/>
    </location>
    <ligand>
        <name>Zn(2+)</name>
        <dbReference type="ChEBI" id="CHEBI:29105"/>
    </ligand>
</feature>
<feature type="binding site" evidence="1">
    <location>
        <position position="460"/>
    </location>
    <ligand>
        <name>Zn(2+)</name>
        <dbReference type="ChEBI" id="CHEBI:29105"/>
    </ligand>
</feature>
<comment type="function">
    <text evidence="1">Catalyzes the attachment of threonine to tRNA(Thr) in a two-step reaction: L-threonine is first activated by ATP to form Thr-AMP and then transferred to the acceptor end of tRNA(Thr). Also edits incorrectly charged L-seryl-tRNA(Thr).</text>
</comment>
<comment type="catalytic activity">
    <reaction evidence="1">
        <text>tRNA(Thr) + L-threonine + ATP = L-threonyl-tRNA(Thr) + AMP + diphosphate + H(+)</text>
        <dbReference type="Rhea" id="RHEA:24624"/>
        <dbReference type="Rhea" id="RHEA-COMP:9670"/>
        <dbReference type="Rhea" id="RHEA-COMP:9704"/>
        <dbReference type="ChEBI" id="CHEBI:15378"/>
        <dbReference type="ChEBI" id="CHEBI:30616"/>
        <dbReference type="ChEBI" id="CHEBI:33019"/>
        <dbReference type="ChEBI" id="CHEBI:57926"/>
        <dbReference type="ChEBI" id="CHEBI:78442"/>
        <dbReference type="ChEBI" id="CHEBI:78534"/>
        <dbReference type="ChEBI" id="CHEBI:456215"/>
        <dbReference type="EC" id="6.1.1.3"/>
    </reaction>
</comment>
<comment type="cofactor">
    <cofactor evidence="1">
        <name>Zn(2+)</name>
        <dbReference type="ChEBI" id="CHEBI:29105"/>
    </cofactor>
    <text evidence="1">Binds 1 zinc ion per subunit.</text>
</comment>
<comment type="subunit">
    <text evidence="1">Homodimer.</text>
</comment>
<comment type="subcellular location">
    <subcellularLocation>
        <location evidence="1">Cytoplasm</location>
    </subcellularLocation>
</comment>
<comment type="domain">
    <text evidence="1">The N-terminal domain is an archaea-specific tRNA-editing domain that hydrolyzes incorrectly charged L-seryl-tRNA(Thr). Catalysis of tRNA editing is performed by the charged tRNA itself.</text>
</comment>
<comment type="similarity">
    <text evidence="1">Belongs to the class-II aminoacyl-tRNA synthetase family.</text>
</comment>
<proteinExistence type="inferred from homology"/>